<name>YQGF_BIFLO</name>
<evidence type="ECO:0000255" key="1">
    <source>
        <dbReference type="HAMAP-Rule" id="MF_00651"/>
    </source>
</evidence>
<evidence type="ECO:0000305" key="2"/>
<gene>
    <name type="ordered locus">BL0881</name>
</gene>
<reference key="1">
    <citation type="journal article" date="2002" name="Proc. Natl. Acad. Sci. U.S.A.">
        <title>The genome sequence of Bifidobacterium longum reflects its adaptation to the human gastrointestinal tract.</title>
        <authorList>
            <person name="Schell M.A."/>
            <person name="Karmirantzou M."/>
            <person name="Snel B."/>
            <person name="Vilanova D."/>
            <person name="Berger B."/>
            <person name="Pessi G."/>
            <person name="Zwahlen M.-C."/>
            <person name="Desiere F."/>
            <person name="Bork P."/>
            <person name="Delley M."/>
            <person name="Pridmore R.D."/>
            <person name="Arigoni F."/>
        </authorList>
    </citation>
    <scope>NUCLEOTIDE SEQUENCE [LARGE SCALE GENOMIC DNA]</scope>
    <source>
        <strain>NCC 2705</strain>
    </source>
</reference>
<keyword id="KW-0963">Cytoplasm</keyword>
<keyword id="KW-0378">Hydrolase</keyword>
<keyword id="KW-0540">Nuclease</keyword>
<keyword id="KW-1185">Reference proteome</keyword>
<keyword id="KW-0690">Ribosome biogenesis</keyword>
<comment type="function">
    <text evidence="1">Could be a nuclease involved in processing of the 5'-end of pre-16S rRNA.</text>
</comment>
<comment type="subcellular location">
    <subcellularLocation>
        <location evidence="1">Cytoplasm</location>
    </subcellularLocation>
</comment>
<comment type="similarity">
    <text evidence="1">Belongs to the YqgF nuclease family.</text>
</comment>
<comment type="sequence caution" evidence="2">
    <conflict type="erroneous initiation">
        <sequence resource="EMBL-CDS" id="AAN24694"/>
    </conflict>
    <text>Truncated N-terminus.</text>
</comment>
<accession>Q8G5X0</accession>
<dbReference type="EC" id="3.1.-.-" evidence="1"/>
<dbReference type="EMBL" id="AE014295">
    <property type="protein sequence ID" value="AAN24694.1"/>
    <property type="status" value="ALT_INIT"/>
    <property type="molecule type" value="Genomic_DNA"/>
</dbReference>
<dbReference type="RefSeq" id="NP_696058.1">
    <property type="nucleotide sequence ID" value="NC_004307.2"/>
</dbReference>
<dbReference type="SMR" id="Q8G5X0"/>
<dbReference type="STRING" id="206672.BL0881"/>
<dbReference type="EnsemblBacteria" id="AAN24694">
    <property type="protein sequence ID" value="AAN24694"/>
    <property type="gene ID" value="BL0881"/>
</dbReference>
<dbReference type="KEGG" id="blo:BL0881"/>
<dbReference type="PATRIC" id="fig|206672.9.peg.577"/>
<dbReference type="HOGENOM" id="CLU_098240_0_0_11"/>
<dbReference type="OrthoDB" id="9790539at2"/>
<dbReference type="Proteomes" id="UP000000439">
    <property type="component" value="Chromosome"/>
</dbReference>
<dbReference type="GO" id="GO:0005829">
    <property type="term" value="C:cytosol"/>
    <property type="evidence" value="ECO:0007669"/>
    <property type="project" value="TreeGrafter"/>
</dbReference>
<dbReference type="GO" id="GO:0004518">
    <property type="term" value="F:nuclease activity"/>
    <property type="evidence" value="ECO:0007669"/>
    <property type="project" value="UniProtKB-KW"/>
</dbReference>
<dbReference type="GO" id="GO:0000967">
    <property type="term" value="P:rRNA 5'-end processing"/>
    <property type="evidence" value="ECO:0007669"/>
    <property type="project" value="UniProtKB-UniRule"/>
</dbReference>
<dbReference type="CDD" id="cd16964">
    <property type="entry name" value="YqgF"/>
    <property type="match status" value="1"/>
</dbReference>
<dbReference type="Gene3D" id="3.30.420.140">
    <property type="entry name" value="YqgF/RNase H-like domain"/>
    <property type="match status" value="1"/>
</dbReference>
<dbReference type="HAMAP" id="MF_00651">
    <property type="entry name" value="Nuclease_YqgF"/>
    <property type="match status" value="1"/>
</dbReference>
<dbReference type="InterPro" id="IPR012337">
    <property type="entry name" value="RNaseH-like_sf"/>
</dbReference>
<dbReference type="InterPro" id="IPR005227">
    <property type="entry name" value="YqgF"/>
</dbReference>
<dbReference type="InterPro" id="IPR006641">
    <property type="entry name" value="YqgF/RNaseH-like_dom"/>
</dbReference>
<dbReference type="InterPro" id="IPR037027">
    <property type="entry name" value="YqgF/RNaseH-like_dom_sf"/>
</dbReference>
<dbReference type="NCBIfam" id="TIGR00250">
    <property type="entry name" value="RNAse_H_YqgF"/>
    <property type="match status" value="1"/>
</dbReference>
<dbReference type="PANTHER" id="PTHR33317">
    <property type="entry name" value="POLYNUCLEOTIDYL TRANSFERASE, RIBONUCLEASE H-LIKE SUPERFAMILY PROTEIN"/>
    <property type="match status" value="1"/>
</dbReference>
<dbReference type="PANTHER" id="PTHR33317:SF4">
    <property type="entry name" value="POLYNUCLEOTIDYL TRANSFERASE, RIBONUCLEASE H-LIKE SUPERFAMILY PROTEIN"/>
    <property type="match status" value="1"/>
</dbReference>
<dbReference type="Pfam" id="PF03652">
    <property type="entry name" value="RuvX"/>
    <property type="match status" value="1"/>
</dbReference>
<dbReference type="SMART" id="SM00732">
    <property type="entry name" value="YqgFc"/>
    <property type="match status" value="1"/>
</dbReference>
<dbReference type="SUPFAM" id="SSF53098">
    <property type="entry name" value="Ribonuclease H-like"/>
    <property type="match status" value="1"/>
</dbReference>
<sequence>MVWLGVDLGNARVGLALSDPELTFAHPAGNIHVAGDYFFAIDEVLNVIEDEHVDHVIVGLPLQMDGTEGKSAKKARRWAANLEKRLQAESEDSDSTEYQIPQVSLIDERLTTVSAHRQLFEAHKASNKHRPVVDQQSAVVILQTALDRTREQ</sequence>
<proteinExistence type="inferred from homology"/>
<feature type="chain" id="PRO_0000172027" description="Putative pre-16S rRNA nuclease">
    <location>
        <begin position="1"/>
        <end position="152"/>
    </location>
</feature>
<organism>
    <name type="scientific">Bifidobacterium longum (strain NCC 2705)</name>
    <dbReference type="NCBI Taxonomy" id="206672"/>
    <lineage>
        <taxon>Bacteria</taxon>
        <taxon>Bacillati</taxon>
        <taxon>Actinomycetota</taxon>
        <taxon>Actinomycetes</taxon>
        <taxon>Bifidobacteriales</taxon>
        <taxon>Bifidobacteriaceae</taxon>
        <taxon>Bifidobacterium</taxon>
    </lineage>
</organism>
<protein>
    <recommendedName>
        <fullName evidence="1">Putative pre-16S rRNA nuclease</fullName>
        <ecNumber evidence="1">3.1.-.-</ecNumber>
    </recommendedName>
</protein>